<feature type="chain" id="PRO_0000186359" description="Bifunctional dihydrofolate reductase-thymidylate synthase">
    <location>
        <begin position="1"/>
        <end position="530"/>
    </location>
</feature>
<feature type="domain" description="DHFR">
    <location>
        <begin position="26"/>
        <end position="203"/>
    </location>
</feature>
<feature type="region of interest" description="Disordered" evidence="2">
    <location>
        <begin position="1"/>
        <end position="20"/>
    </location>
</feature>
<feature type="region of interest" description="Thymidylate synthase">
    <location>
        <begin position="206"/>
        <end position="530"/>
    </location>
</feature>
<feature type="active site" evidence="1">
    <location>
        <position position="412"/>
    </location>
</feature>
<feature type="binding site" evidence="1">
    <location>
        <position position="30"/>
    </location>
    <ligand>
        <name>substrate</name>
    </ligand>
</feature>
<feature type="binding site" evidence="1">
    <location>
        <position position="32"/>
    </location>
    <ligand>
        <name>NADP(+)</name>
        <dbReference type="ChEBI" id="CHEBI:58349"/>
    </ligand>
</feature>
<feature type="binding site" evidence="1">
    <location>
        <begin position="38"/>
        <end position="44"/>
    </location>
    <ligand>
        <name>NADP(+)</name>
        <dbReference type="ChEBI" id="CHEBI:58349"/>
    </ligand>
</feature>
<feature type="binding site" evidence="1">
    <location>
        <position position="52"/>
    </location>
    <ligand>
        <name>substrate</name>
    </ligand>
</feature>
<feature type="binding site" evidence="1">
    <location>
        <begin position="76"/>
        <end position="78"/>
    </location>
    <ligand>
        <name>NADP(+)</name>
        <dbReference type="ChEBI" id="CHEBI:58349"/>
    </ligand>
</feature>
<feature type="binding site" evidence="1">
    <location>
        <begin position="97"/>
        <end position="100"/>
    </location>
    <ligand>
        <name>NADP(+)</name>
        <dbReference type="ChEBI" id="CHEBI:58349"/>
    </ligand>
</feature>
<feature type="binding site" evidence="1">
    <location>
        <position position="139"/>
    </location>
    <ligand>
        <name>substrate</name>
    </ligand>
</feature>
<feature type="binding site" evidence="1">
    <location>
        <begin position="140"/>
        <end position="147"/>
    </location>
    <ligand>
        <name>NADP(+)</name>
        <dbReference type="ChEBI" id="CHEBI:58349"/>
    </ligand>
</feature>
<feature type="binding site" evidence="1">
    <location>
        <position position="160"/>
    </location>
    <ligand>
        <name>substrate</name>
    </ligand>
</feature>
<feature type="binding site" evidence="1">
    <location>
        <position position="267"/>
    </location>
    <ligand>
        <name>dUMP</name>
        <dbReference type="ChEBI" id="CHEBI:246422"/>
    </ligand>
</feature>
<feature type="binding site" evidence="1">
    <location>
        <position position="413"/>
    </location>
    <ligand>
        <name>dUMP</name>
        <dbReference type="ChEBI" id="CHEBI:246422"/>
    </ligand>
</feature>
<feature type="binding site" evidence="1">
    <location>
        <begin position="431"/>
        <end position="435"/>
    </location>
    <ligand>
        <name>dUMP</name>
        <dbReference type="ChEBI" id="CHEBI:246422"/>
    </ligand>
</feature>
<feature type="binding site" evidence="1">
    <location>
        <position position="443"/>
    </location>
    <ligand>
        <name>dUMP</name>
        <dbReference type="ChEBI" id="CHEBI:246422"/>
    </ligand>
</feature>
<feature type="binding site" evidence="1">
    <location>
        <begin position="473"/>
        <end position="475"/>
    </location>
    <ligand>
        <name>dUMP</name>
        <dbReference type="ChEBI" id="CHEBI:246422"/>
    </ligand>
</feature>
<organism>
    <name type="scientific">Glycine max</name>
    <name type="common">Soybean</name>
    <name type="synonym">Glycine hispida</name>
    <dbReference type="NCBI Taxonomy" id="3847"/>
    <lineage>
        <taxon>Eukaryota</taxon>
        <taxon>Viridiplantae</taxon>
        <taxon>Streptophyta</taxon>
        <taxon>Embryophyta</taxon>
        <taxon>Tracheophyta</taxon>
        <taxon>Spermatophyta</taxon>
        <taxon>Magnoliopsida</taxon>
        <taxon>eudicotyledons</taxon>
        <taxon>Gunneridae</taxon>
        <taxon>Pentapetalae</taxon>
        <taxon>rosids</taxon>
        <taxon>fabids</taxon>
        <taxon>Fabales</taxon>
        <taxon>Fabaceae</taxon>
        <taxon>Papilionoideae</taxon>
        <taxon>50 kb inversion clade</taxon>
        <taxon>NPAAA clade</taxon>
        <taxon>indigoferoid/millettioid clade</taxon>
        <taxon>Phaseoleae</taxon>
        <taxon>Glycine</taxon>
        <taxon>Glycine subgen. Soja</taxon>
    </lineage>
</organism>
<protein>
    <recommendedName>
        <fullName>Bifunctional dihydrofolate reductase-thymidylate synthase</fullName>
        <shortName>DHFR-TS</shortName>
    </recommendedName>
    <domain>
        <recommendedName>
            <fullName>Dihydrofolate reductase</fullName>
            <ecNumber>1.5.1.3</ecNumber>
        </recommendedName>
    </domain>
    <domain>
        <recommendedName>
            <fullName>Thymidylate synthase</fullName>
            <ecNumber>2.1.1.45</ecNumber>
        </recommendedName>
    </domain>
</protein>
<dbReference type="EC" id="1.5.1.3"/>
<dbReference type="EC" id="2.1.1.45"/>
<dbReference type="EMBL" id="S78087">
    <property type="protein sequence ID" value="AAB34317.1"/>
    <property type="molecule type" value="mRNA"/>
</dbReference>
<dbReference type="PIR" id="S55683">
    <property type="entry name" value="S55683"/>
</dbReference>
<dbReference type="RefSeq" id="NP_001238644.1">
    <property type="nucleotide sequence ID" value="NM_001251715.1"/>
</dbReference>
<dbReference type="SMR" id="P51820"/>
<dbReference type="FunCoup" id="P51820">
    <property type="interactions" value="5506"/>
</dbReference>
<dbReference type="STRING" id="3847.P51820"/>
<dbReference type="PaxDb" id="3847-GLYMA06G01280.4"/>
<dbReference type="GeneID" id="547833"/>
<dbReference type="KEGG" id="gmx:547833"/>
<dbReference type="eggNOG" id="KOG0673">
    <property type="taxonomic scope" value="Eukaryota"/>
</dbReference>
<dbReference type="eggNOG" id="KOG1324">
    <property type="taxonomic scope" value="Eukaryota"/>
</dbReference>
<dbReference type="InParanoid" id="P51820"/>
<dbReference type="OrthoDB" id="766at2759"/>
<dbReference type="BioCyc" id="MetaCyc:MONOMER-9361"/>
<dbReference type="UniPathway" id="UPA00077">
    <property type="reaction ID" value="UER00158"/>
</dbReference>
<dbReference type="Proteomes" id="UP000008827">
    <property type="component" value="Unplaced"/>
</dbReference>
<dbReference type="GO" id="GO:0005829">
    <property type="term" value="C:cytosol"/>
    <property type="evidence" value="ECO:0000318"/>
    <property type="project" value="GO_Central"/>
</dbReference>
<dbReference type="GO" id="GO:0005739">
    <property type="term" value="C:mitochondrion"/>
    <property type="evidence" value="ECO:0000318"/>
    <property type="project" value="GO_Central"/>
</dbReference>
<dbReference type="GO" id="GO:0004146">
    <property type="term" value="F:dihydrofolate reductase activity"/>
    <property type="evidence" value="ECO:0000318"/>
    <property type="project" value="GO_Central"/>
</dbReference>
<dbReference type="GO" id="GO:0004799">
    <property type="term" value="F:thymidylate synthase activity"/>
    <property type="evidence" value="ECO:0000318"/>
    <property type="project" value="GO_Central"/>
</dbReference>
<dbReference type="GO" id="GO:0006231">
    <property type="term" value="P:dTMP biosynthetic process"/>
    <property type="evidence" value="ECO:0000318"/>
    <property type="project" value="GO_Central"/>
</dbReference>
<dbReference type="GO" id="GO:0032259">
    <property type="term" value="P:methylation"/>
    <property type="evidence" value="ECO:0007669"/>
    <property type="project" value="UniProtKB-KW"/>
</dbReference>
<dbReference type="GO" id="GO:0006730">
    <property type="term" value="P:one-carbon metabolic process"/>
    <property type="evidence" value="ECO:0007669"/>
    <property type="project" value="UniProtKB-KW"/>
</dbReference>
<dbReference type="GO" id="GO:0046654">
    <property type="term" value="P:tetrahydrofolate biosynthetic process"/>
    <property type="evidence" value="ECO:0007669"/>
    <property type="project" value="UniProtKB-UniPathway"/>
</dbReference>
<dbReference type="CDD" id="cd00209">
    <property type="entry name" value="DHFR"/>
    <property type="match status" value="1"/>
</dbReference>
<dbReference type="CDD" id="cd00351">
    <property type="entry name" value="TS_Pyrimidine_HMase"/>
    <property type="match status" value="1"/>
</dbReference>
<dbReference type="FunFam" id="3.40.430.10:FF:000003">
    <property type="entry name" value="Bifunctional dihydrofolate reductase-thymidylate synthase"/>
    <property type="match status" value="1"/>
</dbReference>
<dbReference type="FunFam" id="3.30.572.10:FF:000002">
    <property type="entry name" value="Possible thymidylate synthase"/>
    <property type="match status" value="1"/>
</dbReference>
<dbReference type="Gene3D" id="3.40.430.10">
    <property type="entry name" value="Dihydrofolate Reductase, subunit A"/>
    <property type="match status" value="1"/>
</dbReference>
<dbReference type="Gene3D" id="3.30.572.10">
    <property type="entry name" value="Thymidylate synthase/dCMP hydroxymethylase domain"/>
    <property type="match status" value="1"/>
</dbReference>
<dbReference type="HAMAP" id="MF_00008">
    <property type="entry name" value="Thymidy_synth_bact"/>
    <property type="match status" value="1"/>
</dbReference>
<dbReference type="InterPro" id="IPR024072">
    <property type="entry name" value="DHFR-like_dom_sf"/>
</dbReference>
<dbReference type="InterPro" id="IPR012262">
    <property type="entry name" value="DHFR-TS"/>
</dbReference>
<dbReference type="InterPro" id="IPR017925">
    <property type="entry name" value="DHFR_CS"/>
</dbReference>
<dbReference type="InterPro" id="IPR001796">
    <property type="entry name" value="DHFR_dom"/>
</dbReference>
<dbReference type="InterPro" id="IPR045097">
    <property type="entry name" value="Thymidate_synth/dCMP_Mease"/>
</dbReference>
<dbReference type="InterPro" id="IPR023451">
    <property type="entry name" value="Thymidate_synth/dCMP_Mease_dom"/>
</dbReference>
<dbReference type="InterPro" id="IPR036926">
    <property type="entry name" value="Thymidate_synth/dCMP_Mease_sf"/>
</dbReference>
<dbReference type="InterPro" id="IPR000398">
    <property type="entry name" value="Thymidylate_synthase"/>
</dbReference>
<dbReference type="InterPro" id="IPR020940">
    <property type="entry name" value="Thymidylate_synthase_AS"/>
</dbReference>
<dbReference type="NCBIfam" id="NF002497">
    <property type="entry name" value="PRK01827.1-3"/>
    <property type="match status" value="1"/>
</dbReference>
<dbReference type="NCBIfam" id="TIGR03284">
    <property type="entry name" value="thym_sym"/>
    <property type="match status" value="1"/>
</dbReference>
<dbReference type="PANTHER" id="PTHR11548:SF2">
    <property type="entry name" value="THYMIDYLATE SYNTHASE"/>
    <property type="match status" value="1"/>
</dbReference>
<dbReference type="PANTHER" id="PTHR11548">
    <property type="entry name" value="THYMIDYLATE SYNTHASE 1"/>
    <property type="match status" value="1"/>
</dbReference>
<dbReference type="Pfam" id="PF00186">
    <property type="entry name" value="DHFR_1"/>
    <property type="match status" value="1"/>
</dbReference>
<dbReference type="Pfam" id="PF00303">
    <property type="entry name" value="Thymidylat_synt"/>
    <property type="match status" value="1"/>
</dbReference>
<dbReference type="PIRSF" id="PIRSF000389">
    <property type="entry name" value="DHFR-TS"/>
    <property type="match status" value="1"/>
</dbReference>
<dbReference type="PRINTS" id="PR00108">
    <property type="entry name" value="THYMDSNTHASE"/>
</dbReference>
<dbReference type="SUPFAM" id="SSF53597">
    <property type="entry name" value="Dihydrofolate reductase-like"/>
    <property type="match status" value="1"/>
</dbReference>
<dbReference type="SUPFAM" id="SSF55831">
    <property type="entry name" value="Thymidylate synthase/dCMP hydroxymethylase"/>
    <property type="match status" value="1"/>
</dbReference>
<dbReference type="PROSITE" id="PS00075">
    <property type="entry name" value="DHFR_1"/>
    <property type="match status" value="1"/>
</dbReference>
<dbReference type="PROSITE" id="PS51330">
    <property type="entry name" value="DHFR_2"/>
    <property type="match status" value="1"/>
</dbReference>
<dbReference type="PROSITE" id="PS00091">
    <property type="entry name" value="THYMIDYLATE_SYNTHASE"/>
    <property type="match status" value="1"/>
</dbReference>
<comment type="function">
    <text evidence="1">Bifunctional enzyme. Involved in de novo dTMP biosynthesis. Key enzyme in folate metabolism. Can play two different roles depending on the source of dihydrofolate: de novo synthesis of tetrahydrofolate or recycling of the dihydrofolate released as one of the end products of the TS catalyzed reaction. Catalyzes an essential reaction for de novo glycine and purine synthesis, DNA precursor synthesis, and for the conversion of dUMP to dTMP (By similarity).</text>
</comment>
<comment type="catalytic activity">
    <reaction>
        <text>(6S)-5,6,7,8-tetrahydrofolate + NADP(+) = 7,8-dihydrofolate + NADPH + H(+)</text>
        <dbReference type="Rhea" id="RHEA:15009"/>
        <dbReference type="ChEBI" id="CHEBI:15378"/>
        <dbReference type="ChEBI" id="CHEBI:57451"/>
        <dbReference type="ChEBI" id="CHEBI:57453"/>
        <dbReference type="ChEBI" id="CHEBI:57783"/>
        <dbReference type="ChEBI" id="CHEBI:58349"/>
        <dbReference type="EC" id="1.5.1.3"/>
    </reaction>
</comment>
<comment type="catalytic activity">
    <reaction>
        <text>dUMP + (6R)-5,10-methylene-5,6,7,8-tetrahydrofolate = 7,8-dihydrofolate + dTMP</text>
        <dbReference type="Rhea" id="RHEA:12104"/>
        <dbReference type="ChEBI" id="CHEBI:15636"/>
        <dbReference type="ChEBI" id="CHEBI:57451"/>
        <dbReference type="ChEBI" id="CHEBI:63528"/>
        <dbReference type="ChEBI" id="CHEBI:246422"/>
        <dbReference type="EC" id="2.1.1.45"/>
    </reaction>
</comment>
<comment type="pathway">
    <text>Cofactor biosynthesis; tetrahydrofolate biosynthesis; 5,6,7,8-tetrahydrofolate from 7,8-dihydrofolate: step 1/1.</text>
</comment>
<comment type="similarity">
    <text evidence="3">In the N-terminal section; belongs to the dihydrofolate reductase family.</text>
</comment>
<comment type="similarity">
    <text evidence="3">In the C-terminal section; belongs to the thymidylate synthase family.</text>
</comment>
<sequence length="530" mass="59745">MPSDSSVISNGHSNGSVNPLPNLQRTYQVVVAATQDWGIGKDGKLPWRLPTDLKFFKEITMKTSEPGKKNAIVMGRKTWESIPLEYRPLSGRLNVVLTRSGSFDIATAENVVICGSMSSALELLAASPYSLSIEKVFVIGGGQIFREALNVPGCEAIHLTEIQSSIECDTFMPPVDFTIFRPWYSSFPKVENNIRYSFTTYVRVRSSAAESAGQNIDPLLDNNSESMKFEVKDFSFLPKMISERHEEYLYLKLVQDIIAEGTTKGDRTGTGTLSKFGCQMRFNLRGNFPLLTTKKVFWRGVVEELLWFISGSTNAKVLQEKGIHIWDGNASREYLDGVGLTEREEGDLGPVYGFQWRHFGARYTDMHHDYSGQGFDQLLDVINKIKRNPDDRRIILSAWNPVDLKLMALPPCHMFAQFYVAHGELSCQMYQRSADMGLGIPFNIASYALLTCMIAHVCDLIPGDFIHVIGDAHIYRNHVRPLQEQLHNQPKPFPTLKINPKKKDIDSFVAADFKLIGYDPHQKIDMKLSV</sequence>
<accession>P51820</accession>
<keyword id="KW-0903">Direct protein sequencing</keyword>
<keyword id="KW-0489">Methyltransferase</keyword>
<keyword id="KW-0511">Multifunctional enzyme</keyword>
<keyword id="KW-0521">NADP</keyword>
<keyword id="KW-0545">Nucleotide biosynthesis</keyword>
<keyword id="KW-0554">One-carbon metabolism</keyword>
<keyword id="KW-0560">Oxidoreductase</keyword>
<keyword id="KW-1185">Reference proteome</keyword>
<keyword id="KW-0808">Transferase</keyword>
<proteinExistence type="evidence at protein level"/>
<evidence type="ECO:0000250" key="1"/>
<evidence type="ECO:0000256" key="2">
    <source>
        <dbReference type="SAM" id="MobiDB-lite"/>
    </source>
</evidence>
<evidence type="ECO:0000305" key="3"/>
<name>DRTS_SOYBN</name>
<reference key="1">
    <citation type="journal article" date="1995" name="Biochim. Biophys. Acta">
        <title>Cloning, nucleotide sequence and expression of the bifunctional dihydrofolate reductase-thymidylate synthase from Glycine max.</title>
        <authorList>
            <person name="Wang M."/>
            <person name="Ratnam S."/>
            <person name="Freisheim J.H."/>
        </authorList>
    </citation>
    <scope>NUCLEOTIDE SEQUENCE [MRNA]</scope>
    <scope>PARTIAL PROTEIN SEQUENCE</scope>
</reference>